<comment type="function">
    <text evidence="1">This is one of the proteins that binds to the 5S RNA in the ribosome where it forms part of the central protuberance.</text>
</comment>
<comment type="subunit">
    <text evidence="1">Part of the 50S ribosomal subunit; part of the 5S rRNA/L5/L18/L25 subcomplex. Contacts the 5S rRNA. Binds to the 5S rRNA independently of L5 and L18.</text>
</comment>
<comment type="similarity">
    <text evidence="1">Belongs to the bacterial ribosomal protein bL25 family.</text>
</comment>
<proteinExistence type="inferred from homology"/>
<dbReference type="EMBL" id="AM942759">
    <property type="protein sequence ID" value="CAR41879.1"/>
    <property type="molecule type" value="Genomic_DNA"/>
</dbReference>
<dbReference type="RefSeq" id="WP_004247799.1">
    <property type="nucleotide sequence ID" value="NC_010554.1"/>
</dbReference>
<dbReference type="SMR" id="B4ET93"/>
<dbReference type="EnsemblBacteria" id="CAR41879">
    <property type="protein sequence ID" value="CAR41879"/>
    <property type="gene ID" value="PMI0826"/>
</dbReference>
<dbReference type="GeneID" id="6803671"/>
<dbReference type="KEGG" id="pmr:PMI0826"/>
<dbReference type="eggNOG" id="COG1825">
    <property type="taxonomic scope" value="Bacteria"/>
</dbReference>
<dbReference type="HOGENOM" id="CLU_137946_0_0_6"/>
<dbReference type="Proteomes" id="UP000008319">
    <property type="component" value="Chromosome"/>
</dbReference>
<dbReference type="GO" id="GO:0022625">
    <property type="term" value="C:cytosolic large ribosomal subunit"/>
    <property type="evidence" value="ECO:0007669"/>
    <property type="project" value="TreeGrafter"/>
</dbReference>
<dbReference type="GO" id="GO:0008097">
    <property type="term" value="F:5S rRNA binding"/>
    <property type="evidence" value="ECO:0007669"/>
    <property type="project" value="InterPro"/>
</dbReference>
<dbReference type="GO" id="GO:0003735">
    <property type="term" value="F:structural constituent of ribosome"/>
    <property type="evidence" value="ECO:0007669"/>
    <property type="project" value="InterPro"/>
</dbReference>
<dbReference type="GO" id="GO:0006412">
    <property type="term" value="P:translation"/>
    <property type="evidence" value="ECO:0007669"/>
    <property type="project" value="UniProtKB-UniRule"/>
</dbReference>
<dbReference type="CDD" id="cd00495">
    <property type="entry name" value="Ribosomal_L25_TL5_CTC"/>
    <property type="match status" value="1"/>
</dbReference>
<dbReference type="FunFam" id="2.40.240.10:FF:000002">
    <property type="entry name" value="50S ribosomal protein L25"/>
    <property type="match status" value="1"/>
</dbReference>
<dbReference type="Gene3D" id="2.40.240.10">
    <property type="entry name" value="Ribosomal Protein L25, Chain P"/>
    <property type="match status" value="1"/>
</dbReference>
<dbReference type="HAMAP" id="MF_01336">
    <property type="entry name" value="Ribosomal_bL25"/>
    <property type="match status" value="1"/>
</dbReference>
<dbReference type="InterPro" id="IPR020056">
    <property type="entry name" value="Rbsml_bL25/Gln-tRNA_synth_N"/>
</dbReference>
<dbReference type="InterPro" id="IPR011035">
    <property type="entry name" value="Ribosomal_bL25/Gln-tRNA_synth"/>
</dbReference>
<dbReference type="InterPro" id="IPR020055">
    <property type="entry name" value="Ribosomal_bL25_short"/>
</dbReference>
<dbReference type="InterPro" id="IPR029751">
    <property type="entry name" value="Ribosomal_L25_dom"/>
</dbReference>
<dbReference type="InterPro" id="IPR020930">
    <property type="entry name" value="Ribosomal_uL5_bac-type"/>
</dbReference>
<dbReference type="NCBIfam" id="NF004612">
    <property type="entry name" value="PRK05943.1"/>
    <property type="match status" value="1"/>
</dbReference>
<dbReference type="PANTHER" id="PTHR33284">
    <property type="entry name" value="RIBOSOMAL PROTEIN L25/GLN-TRNA SYNTHETASE, ANTI-CODON-BINDING DOMAIN-CONTAINING PROTEIN"/>
    <property type="match status" value="1"/>
</dbReference>
<dbReference type="PANTHER" id="PTHR33284:SF1">
    <property type="entry name" value="RIBOSOMAL PROTEIN L25_GLN-TRNA SYNTHETASE, ANTI-CODON-BINDING DOMAIN-CONTAINING PROTEIN"/>
    <property type="match status" value="1"/>
</dbReference>
<dbReference type="Pfam" id="PF01386">
    <property type="entry name" value="Ribosomal_L25p"/>
    <property type="match status" value="1"/>
</dbReference>
<dbReference type="SUPFAM" id="SSF50715">
    <property type="entry name" value="Ribosomal protein L25-like"/>
    <property type="match status" value="1"/>
</dbReference>
<name>RL25_PROMH</name>
<accession>B4ET93</accession>
<organism>
    <name type="scientific">Proteus mirabilis (strain HI4320)</name>
    <dbReference type="NCBI Taxonomy" id="529507"/>
    <lineage>
        <taxon>Bacteria</taxon>
        <taxon>Pseudomonadati</taxon>
        <taxon>Pseudomonadota</taxon>
        <taxon>Gammaproteobacteria</taxon>
        <taxon>Enterobacterales</taxon>
        <taxon>Morganellaceae</taxon>
        <taxon>Proteus</taxon>
    </lineage>
</organism>
<keyword id="KW-1185">Reference proteome</keyword>
<keyword id="KW-0687">Ribonucleoprotein</keyword>
<keyword id="KW-0689">Ribosomal protein</keyword>
<keyword id="KW-0694">RNA-binding</keyword>
<keyword id="KW-0699">rRNA-binding</keyword>
<protein>
    <recommendedName>
        <fullName evidence="1">Large ribosomal subunit protein bL25</fullName>
    </recommendedName>
    <alternativeName>
        <fullName evidence="2">50S ribosomal protein L25</fullName>
    </alternativeName>
</protein>
<evidence type="ECO:0000255" key="1">
    <source>
        <dbReference type="HAMAP-Rule" id="MF_01336"/>
    </source>
</evidence>
<evidence type="ECO:0000305" key="2"/>
<reference key="1">
    <citation type="journal article" date="2008" name="J. Bacteriol.">
        <title>Complete genome sequence of uropathogenic Proteus mirabilis, a master of both adherence and motility.</title>
        <authorList>
            <person name="Pearson M.M."/>
            <person name="Sebaihia M."/>
            <person name="Churcher C."/>
            <person name="Quail M.A."/>
            <person name="Seshasayee A.S."/>
            <person name="Luscombe N.M."/>
            <person name="Abdellah Z."/>
            <person name="Arrosmith C."/>
            <person name="Atkin B."/>
            <person name="Chillingworth T."/>
            <person name="Hauser H."/>
            <person name="Jagels K."/>
            <person name="Moule S."/>
            <person name="Mungall K."/>
            <person name="Norbertczak H."/>
            <person name="Rabbinowitsch E."/>
            <person name="Walker D."/>
            <person name="Whithead S."/>
            <person name="Thomson N.R."/>
            <person name="Rather P.N."/>
            <person name="Parkhill J."/>
            <person name="Mobley H.L.T."/>
        </authorList>
    </citation>
    <scope>NUCLEOTIDE SEQUENCE [LARGE SCALE GENOMIC DNA]</scope>
    <source>
        <strain>HI4320</strain>
    </source>
</reference>
<gene>
    <name evidence="1" type="primary">rplY</name>
    <name type="ordered locus">PMI0826</name>
</gene>
<feature type="chain" id="PRO_1000142588" description="Large ribosomal subunit protein bL25">
    <location>
        <begin position="1"/>
        <end position="94"/>
    </location>
</feature>
<sequence>MLTINATVRKEQGKGASRRLRVANRFPAIVYGGNEEPIAIDLDHNEVINQEHKSEFYADFVNLVIDGKATKVKVKAVQRHEYKPKITHIDFLRA</sequence>